<name>HLDE_PHOPR</name>
<keyword id="KW-0067">ATP-binding</keyword>
<keyword id="KW-0119">Carbohydrate metabolism</keyword>
<keyword id="KW-0418">Kinase</keyword>
<keyword id="KW-0511">Multifunctional enzyme</keyword>
<keyword id="KW-0547">Nucleotide-binding</keyword>
<keyword id="KW-0548">Nucleotidyltransferase</keyword>
<keyword id="KW-1185">Reference proteome</keyword>
<keyword id="KW-0808">Transferase</keyword>
<proteinExistence type="inferred from homology"/>
<comment type="function">
    <text evidence="1">Catalyzes the phosphorylation of D-glycero-D-manno-heptose 7-phosphate at the C-1 position to selectively form D-glycero-beta-D-manno-heptose-1,7-bisphosphate.</text>
</comment>
<comment type="function">
    <text evidence="1">Catalyzes the ADP transfer from ATP to D-glycero-beta-D-manno-heptose 1-phosphate, yielding ADP-D-glycero-beta-D-manno-heptose.</text>
</comment>
<comment type="catalytic activity">
    <reaction evidence="1">
        <text>D-glycero-beta-D-manno-heptose 7-phosphate + ATP = D-glycero-beta-D-manno-heptose 1,7-bisphosphate + ADP + H(+)</text>
        <dbReference type="Rhea" id="RHEA:27473"/>
        <dbReference type="ChEBI" id="CHEBI:15378"/>
        <dbReference type="ChEBI" id="CHEBI:30616"/>
        <dbReference type="ChEBI" id="CHEBI:60204"/>
        <dbReference type="ChEBI" id="CHEBI:60208"/>
        <dbReference type="ChEBI" id="CHEBI:456216"/>
        <dbReference type="EC" id="2.7.1.167"/>
    </reaction>
</comment>
<comment type="catalytic activity">
    <reaction evidence="1">
        <text>D-glycero-beta-D-manno-heptose 1-phosphate + ATP + H(+) = ADP-D-glycero-beta-D-manno-heptose + diphosphate</text>
        <dbReference type="Rhea" id="RHEA:27465"/>
        <dbReference type="ChEBI" id="CHEBI:15378"/>
        <dbReference type="ChEBI" id="CHEBI:30616"/>
        <dbReference type="ChEBI" id="CHEBI:33019"/>
        <dbReference type="ChEBI" id="CHEBI:59967"/>
        <dbReference type="ChEBI" id="CHEBI:61593"/>
        <dbReference type="EC" id="2.7.7.70"/>
    </reaction>
</comment>
<comment type="pathway">
    <text evidence="1">Nucleotide-sugar biosynthesis; ADP-L-glycero-beta-D-manno-heptose biosynthesis; ADP-L-glycero-beta-D-manno-heptose from D-glycero-beta-D-manno-heptose 7-phosphate: step 1/4.</text>
</comment>
<comment type="pathway">
    <text evidence="1">Nucleotide-sugar biosynthesis; ADP-L-glycero-beta-D-manno-heptose biosynthesis; ADP-L-glycero-beta-D-manno-heptose from D-glycero-beta-D-manno-heptose 7-phosphate: step 3/4.</text>
</comment>
<comment type="subunit">
    <text evidence="1">Homodimer.</text>
</comment>
<comment type="similarity">
    <text evidence="1">In the N-terminal section; belongs to the carbohydrate kinase PfkB family.</text>
</comment>
<comment type="similarity">
    <text evidence="1">In the C-terminal section; belongs to the cytidylyltransferase family.</text>
</comment>
<organism>
    <name type="scientific">Photobacterium profundum (strain SS9)</name>
    <dbReference type="NCBI Taxonomy" id="298386"/>
    <lineage>
        <taxon>Bacteria</taxon>
        <taxon>Pseudomonadati</taxon>
        <taxon>Pseudomonadota</taxon>
        <taxon>Gammaproteobacteria</taxon>
        <taxon>Vibrionales</taxon>
        <taxon>Vibrionaceae</taxon>
        <taxon>Photobacterium</taxon>
    </lineage>
</organism>
<gene>
    <name evidence="1" type="primary">hldE</name>
    <name type="ordered locus">PBPRA0449</name>
</gene>
<dbReference type="EC" id="2.7.1.167" evidence="1"/>
<dbReference type="EC" id="2.7.7.70" evidence="1"/>
<dbReference type="EMBL" id="CR378664">
    <property type="protein sequence ID" value="CAG18880.1"/>
    <property type="molecule type" value="Genomic_DNA"/>
</dbReference>
<dbReference type="RefSeq" id="WP_011217236.1">
    <property type="nucleotide sequence ID" value="NC_006370.1"/>
</dbReference>
<dbReference type="SMR" id="Q6LUZ5"/>
<dbReference type="STRING" id="298386.PBPRA0449"/>
<dbReference type="KEGG" id="ppr:PBPRA0449"/>
<dbReference type="eggNOG" id="COG0615">
    <property type="taxonomic scope" value="Bacteria"/>
</dbReference>
<dbReference type="eggNOG" id="COG2870">
    <property type="taxonomic scope" value="Bacteria"/>
</dbReference>
<dbReference type="HOGENOM" id="CLU_021150_2_1_6"/>
<dbReference type="UniPathway" id="UPA00356">
    <property type="reaction ID" value="UER00437"/>
</dbReference>
<dbReference type="UniPathway" id="UPA00356">
    <property type="reaction ID" value="UER00439"/>
</dbReference>
<dbReference type="Proteomes" id="UP000000593">
    <property type="component" value="Chromosome 1"/>
</dbReference>
<dbReference type="GO" id="GO:0005829">
    <property type="term" value="C:cytosol"/>
    <property type="evidence" value="ECO:0007669"/>
    <property type="project" value="TreeGrafter"/>
</dbReference>
<dbReference type="GO" id="GO:0005524">
    <property type="term" value="F:ATP binding"/>
    <property type="evidence" value="ECO:0007669"/>
    <property type="project" value="UniProtKB-UniRule"/>
</dbReference>
<dbReference type="GO" id="GO:0033785">
    <property type="term" value="F:heptose 7-phosphate kinase activity"/>
    <property type="evidence" value="ECO:0007669"/>
    <property type="project" value="UniProtKB-UniRule"/>
</dbReference>
<dbReference type="GO" id="GO:0033786">
    <property type="term" value="F:heptose-1-phosphate adenylyltransferase activity"/>
    <property type="evidence" value="ECO:0007669"/>
    <property type="project" value="UniProtKB-UniRule"/>
</dbReference>
<dbReference type="GO" id="GO:0016773">
    <property type="term" value="F:phosphotransferase activity, alcohol group as acceptor"/>
    <property type="evidence" value="ECO:0007669"/>
    <property type="project" value="InterPro"/>
</dbReference>
<dbReference type="GO" id="GO:0097171">
    <property type="term" value="P:ADP-L-glycero-beta-D-manno-heptose biosynthetic process"/>
    <property type="evidence" value="ECO:0007669"/>
    <property type="project" value="UniProtKB-UniPathway"/>
</dbReference>
<dbReference type="CDD" id="cd01172">
    <property type="entry name" value="RfaE_like"/>
    <property type="match status" value="1"/>
</dbReference>
<dbReference type="FunFam" id="3.40.1190.20:FF:000002">
    <property type="entry name" value="Bifunctional protein HldE"/>
    <property type="match status" value="1"/>
</dbReference>
<dbReference type="FunFam" id="3.40.50.620:FF:000028">
    <property type="entry name" value="Bifunctional protein HldE"/>
    <property type="match status" value="1"/>
</dbReference>
<dbReference type="Gene3D" id="3.40.1190.20">
    <property type="match status" value="1"/>
</dbReference>
<dbReference type="Gene3D" id="3.40.50.620">
    <property type="entry name" value="HUPs"/>
    <property type="match status" value="1"/>
</dbReference>
<dbReference type="HAMAP" id="MF_01603">
    <property type="entry name" value="HldE"/>
    <property type="match status" value="1"/>
</dbReference>
<dbReference type="InterPro" id="IPR023030">
    <property type="entry name" value="Bifunc_HldE"/>
</dbReference>
<dbReference type="InterPro" id="IPR002173">
    <property type="entry name" value="Carboh/pur_kinase_PfkB_CS"/>
</dbReference>
<dbReference type="InterPro" id="IPR004821">
    <property type="entry name" value="Cyt_trans-like"/>
</dbReference>
<dbReference type="InterPro" id="IPR011611">
    <property type="entry name" value="PfkB_dom"/>
</dbReference>
<dbReference type="InterPro" id="IPR011913">
    <property type="entry name" value="RfaE_dom_I"/>
</dbReference>
<dbReference type="InterPro" id="IPR011914">
    <property type="entry name" value="RfaE_dom_II"/>
</dbReference>
<dbReference type="InterPro" id="IPR029056">
    <property type="entry name" value="Ribokinase-like"/>
</dbReference>
<dbReference type="InterPro" id="IPR014729">
    <property type="entry name" value="Rossmann-like_a/b/a_fold"/>
</dbReference>
<dbReference type="NCBIfam" id="TIGR00125">
    <property type="entry name" value="cyt_tran_rel"/>
    <property type="match status" value="1"/>
</dbReference>
<dbReference type="NCBIfam" id="NF008454">
    <property type="entry name" value="PRK11316.1"/>
    <property type="match status" value="1"/>
</dbReference>
<dbReference type="NCBIfam" id="TIGR02198">
    <property type="entry name" value="rfaE_dom_I"/>
    <property type="match status" value="1"/>
</dbReference>
<dbReference type="NCBIfam" id="TIGR02199">
    <property type="entry name" value="rfaE_dom_II"/>
    <property type="match status" value="1"/>
</dbReference>
<dbReference type="PANTHER" id="PTHR46969">
    <property type="entry name" value="BIFUNCTIONAL PROTEIN HLDE"/>
    <property type="match status" value="1"/>
</dbReference>
<dbReference type="PANTHER" id="PTHR46969:SF1">
    <property type="entry name" value="BIFUNCTIONAL PROTEIN HLDE"/>
    <property type="match status" value="1"/>
</dbReference>
<dbReference type="Pfam" id="PF01467">
    <property type="entry name" value="CTP_transf_like"/>
    <property type="match status" value="1"/>
</dbReference>
<dbReference type="Pfam" id="PF00294">
    <property type="entry name" value="PfkB"/>
    <property type="match status" value="1"/>
</dbReference>
<dbReference type="SUPFAM" id="SSF52374">
    <property type="entry name" value="Nucleotidylyl transferase"/>
    <property type="match status" value="1"/>
</dbReference>
<dbReference type="SUPFAM" id="SSF53613">
    <property type="entry name" value="Ribokinase-like"/>
    <property type="match status" value="1"/>
</dbReference>
<dbReference type="PROSITE" id="PS00583">
    <property type="entry name" value="PFKB_KINASES_1"/>
    <property type="match status" value="1"/>
</dbReference>
<sequence>MKLTLPDYDQASVLVVGDIMLDRYWYGPTGRISPEAPVPVVKVEQIEERPGGAANVAMNIAALGGHVHLVGLTGIDEPAKALNEKLTSLDVRCDFVSLPDYPTITKLRVMSRGQQMIRLDFEEGFHGVDKGLILPRLEQSLTHVKTVILSDYAKGALEHVSAMIKLARDAGKPVFIDPKGTDFERYRGATLLTPNLSEFELVAGKVTSDDELVEKGFELIERFDFEALLVTRSEHGMTLLQKGQAPLHLPTLAQEVYDVTGAGDTVISVLASSVAAGKSLADACKLANAAAGVVVAKLGTSTLSTIELTEAIYGSQDSGYGVIAETELKQAVSVARQRGETVVMTNGCFDILHAGHVAYLAEAAKLGDRLIVAVNSDSSVQGLKGPGRPVNPEDRRMAVLAGLGAVDWVVPFTEETPQRLISEILPSLLVKGGDYKPEDIAGGKEVIAAGGEVRVLSFEDGCSTSKIIEAIRGGKG</sequence>
<protein>
    <recommendedName>
        <fullName evidence="1">Bifunctional protein HldE</fullName>
    </recommendedName>
    <domain>
        <recommendedName>
            <fullName evidence="1">D-beta-D-heptose 7-phosphate kinase</fullName>
            <ecNumber evidence="1">2.7.1.167</ecNumber>
        </recommendedName>
        <alternativeName>
            <fullName evidence="1">D-beta-D-heptose 7-phosphotransferase</fullName>
        </alternativeName>
        <alternativeName>
            <fullName evidence="1">D-glycero-beta-D-manno-heptose-7-phosphate kinase</fullName>
        </alternativeName>
    </domain>
    <domain>
        <recommendedName>
            <fullName evidence="1">D-beta-D-heptose 1-phosphate adenylyltransferase</fullName>
            <ecNumber evidence="1">2.7.7.70</ecNumber>
        </recommendedName>
        <alternativeName>
            <fullName evidence="1">D-glycero-beta-D-manno-heptose 1-phosphate adenylyltransferase</fullName>
        </alternativeName>
    </domain>
</protein>
<evidence type="ECO:0000255" key="1">
    <source>
        <dbReference type="HAMAP-Rule" id="MF_01603"/>
    </source>
</evidence>
<reference key="1">
    <citation type="journal article" date="2005" name="Science">
        <title>Life at depth: Photobacterium profundum genome sequence and expression analysis.</title>
        <authorList>
            <person name="Vezzi A."/>
            <person name="Campanaro S."/>
            <person name="D'Angelo M."/>
            <person name="Simonato F."/>
            <person name="Vitulo N."/>
            <person name="Lauro F.M."/>
            <person name="Cestaro A."/>
            <person name="Malacrida G."/>
            <person name="Simionati B."/>
            <person name="Cannata N."/>
            <person name="Romualdi C."/>
            <person name="Bartlett D.H."/>
            <person name="Valle G."/>
        </authorList>
    </citation>
    <scope>NUCLEOTIDE SEQUENCE [LARGE SCALE GENOMIC DNA]</scope>
    <source>
        <strain>ATCC BAA-1253 / SS9</strain>
    </source>
</reference>
<accession>Q6LUZ5</accession>
<feature type="chain" id="PRO_0000080118" description="Bifunctional protein HldE">
    <location>
        <begin position="1"/>
        <end position="476"/>
    </location>
</feature>
<feature type="region of interest" description="Ribokinase">
    <location>
        <begin position="1"/>
        <end position="319"/>
    </location>
</feature>
<feature type="region of interest" description="Cytidylyltransferase">
    <location>
        <begin position="344"/>
        <end position="476"/>
    </location>
</feature>
<feature type="active site" evidence="1">
    <location>
        <position position="264"/>
    </location>
</feature>
<feature type="binding site" evidence="1">
    <location>
        <begin position="195"/>
        <end position="198"/>
    </location>
    <ligand>
        <name>ATP</name>
        <dbReference type="ChEBI" id="CHEBI:30616"/>
    </ligand>
</feature>